<gene>
    <name type="primary">gatB</name>
    <name type="ordered locus">MYPU_2010</name>
</gene>
<keyword id="KW-0067">ATP-binding</keyword>
<keyword id="KW-0436">Ligase</keyword>
<keyword id="KW-0547">Nucleotide-binding</keyword>
<keyword id="KW-0648">Protein biosynthesis</keyword>
<keyword id="KW-1185">Reference proteome</keyword>
<comment type="function">
    <text evidence="1">Allows the formation of correctly charged Asn-tRNA(Asn) or Gln-tRNA(Gln) through the transamidation of misacylated Asp-tRNA(Asn) or Glu-tRNA(Gln) in organisms which lack either or both of asparaginyl-tRNA or glutaminyl-tRNA synthetases. The reaction takes place in the presence of glutamine and ATP through an activated phospho-Asp-tRNA(Asn) or phospho-Glu-tRNA(Gln) (By similarity).</text>
</comment>
<comment type="catalytic activity">
    <reaction>
        <text>L-glutamyl-tRNA(Gln) + L-glutamine + ATP + H2O = L-glutaminyl-tRNA(Gln) + L-glutamate + ADP + phosphate + H(+)</text>
        <dbReference type="Rhea" id="RHEA:17521"/>
        <dbReference type="Rhea" id="RHEA-COMP:9681"/>
        <dbReference type="Rhea" id="RHEA-COMP:9684"/>
        <dbReference type="ChEBI" id="CHEBI:15377"/>
        <dbReference type="ChEBI" id="CHEBI:15378"/>
        <dbReference type="ChEBI" id="CHEBI:29985"/>
        <dbReference type="ChEBI" id="CHEBI:30616"/>
        <dbReference type="ChEBI" id="CHEBI:43474"/>
        <dbReference type="ChEBI" id="CHEBI:58359"/>
        <dbReference type="ChEBI" id="CHEBI:78520"/>
        <dbReference type="ChEBI" id="CHEBI:78521"/>
        <dbReference type="ChEBI" id="CHEBI:456216"/>
    </reaction>
</comment>
<comment type="catalytic activity">
    <reaction>
        <text>L-aspartyl-tRNA(Asn) + L-glutamine + ATP + H2O = L-asparaginyl-tRNA(Asn) + L-glutamate + ADP + phosphate + 2 H(+)</text>
        <dbReference type="Rhea" id="RHEA:14513"/>
        <dbReference type="Rhea" id="RHEA-COMP:9674"/>
        <dbReference type="Rhea" id="RHEA-COMP:9677"/>
        <dbReference type="ChEBI" id="CHEBI:15377"/>
        <dbReference type="ChEBI" id="CHEBI:15378"/>
        <dbReference type="ChEBI" id="CHEBI:29985"/>
        <dbReference type="ChEBI" id="CHEBI:30616"/>
        <dbReference type="ChEBI" id="CHEBI:43474"/>
        <dbReference type="ChEBI" id="CHEBI:58359"/>
        <dbReference type="ChEBI" id="CHEBI:78515"/>
        <dbReference type="ChEBI" id="CHEBI:78516"/>
        <dbReference type="ChEBI" id="CHEBI:456216"/>
    </reaction>
</comment>
<comment type="subunit">
    <text evidence="1">Heterotrimer of A, B and C subunits.</text>
</comment>
<comment type="similarity">
    <text evidence="2">Belongs to the GatB/GatE family. GatB subfamily.</text>
</comment>
<comment type="sequence caution" evidence="2">
    <conflict type="erroneous initiation">
        <sequence resource="EMBL-CDS" id="CAC13374"/>
    </conflict>
</comment>
<accession>Q98R09</accession>
<dbReference type="EC" id="6.3.5.-"/>
<dbReference type="EMBL" id="AL445563">
    <property type="protein sequence ID" value="CAC13374.1"/>
    <property type="status" value="ALT_INIT"/>
    <property type="molecule type" value="Genomic_DNA"/>
</dbReference>
<dbReference type="PIR" id="A90537">
    <property type="entry name" value="A90537"/>
</dbReference>
<dbReference type="RefSeq" id="WP_041363972.1">
    <property type="nucleotide sequence ID" value="NC_002771.1"/>
</dbReference>
<dbReference type="SMR" id="Q98R09"/>
<dbReference type="STRING" id="272635.gene:17576788"/>
<dbReference type="KEGG" id="mpu:MYPU_2010"/>
<dbReference type="eggNOG" id="COG0064">
    <property type="taxonomic scope" value="Bacteria"/>
</dbReference>
<dbReference type="HOGENOM" id="CLU_019240_0_0_14"/>
<dbReference type="BioCyc" id="MPUL272635:G1GT6-203-MONOMER"/>
<dbReference type="Proteomes" id="UP000000528">
    <property type="component" value="Chromosome"/>
</dbReference>
<dbReference type="GO" id="GO:0050566">
    <property type="term" value="F:asparaginyl-tRNA synthase (glutamine-hydrolyzing) activity"/>
    <property type="evidence" value="ECO:0007669"/>
    <property type="project" value="RHEA"/>
</dbReference>
<dbReference type="GO" id="GO:0005524">
    <property type="term" value="F:ATP binding"/>
    <property type="evidence" value="ECO:0007669"/>
    <property type="project" value="UniProtKB-KW"/>
</dbReference>
<dbReference type="GO" id="GO:0050567">
    <property type="term" value="F:glutaminyl-tRNA synthase (glutamine-hydrolyzing) activity"/>
    <property type="evidence" value="ECO:0007669"/>
    <property type="project" value="UniProtKB-UniRule"/>
</dbReference>
<dbReference type="GO" id="GO:0070681">
    <property type="term" value="P:glutaminyl-tRNAGln biosynthesis via transamidation"/>
    <property type="evidence" value="ECO:0007669"/>
    <property type="project" value="TreeGrafter"/>
</dbReference>
<dbReference type="GO" id="GO:0006412">
    <property type="term" value="P:translation"/>
    <property type="evidence" value="ECO:0007669"/>
    <property type="project" value="UniProtKB-UniRule"/>
</dbReference>
<dbReference type="Gene3D" id="1.10.10.410">
    <property type="match status" value="1"/>
</dbReference>
<dbReference type="HAMAP" id="MF_00121">
    <property type="entry name" value="GatB"/>
    <property type="match status" value="1"/>
</dbReference>
<dbReference type="InterPro" id="IPR017959">
    <property type="entry name" value="Asn/Gln-tRNA_amidoTrfase_suB/E"/>
</dbReference>
<dbReference type="InterPro" id="IPR006075">
    <property type="entry name" value="Asn/Gln-tRNA_Trfase_suB/E_cat"/>
</dbReference>
<dbReference type="InterPro" id="IPR018027">
    <property type="entry name" value="Asn/Gln_amidotransferase"/>
</dbReference>
<dbReference type="InterPro" id="IPR003789">
    <property type="entry name" value="Asn/Gln_tRNA_amidoTrase-B-like"/>
</dbReference>
<dbReference type="InterPro" id="IPR004413">
    <property type="entry name" value="GatB"/>
</dbReference>
<dbReference type="InterPro" id="IPR023168">
    <property type="entry name" value="GatB_Yqey_C_2"/>
</dbReference>
<dbReference type="InterPro" id="IPR017958">
    <property type="entry name" value="Gln-tRNA_amidoTrfase_suB_CS"/>
</dbReference>
<dbReference type="InterPro" id="IPR014746">
    <property type="entry name" value="Gln_synth/guanido_kin_cat_dom"/>
</dbReference>
<dbReference type="NCBIfam" id="TIGR00133">
    <property type="entry name" value="gatB"/>
    <property type="match status" value="1"/>
</dbReference>
<dbReference type="NCBIfam" id="NF004012">
    <property type="entry name" value="PRK05477.1-2"/>
    <property type="match status" value="1"/>
</dbReference>
<dbReference type="NCBIfam" id="NF004014">
    <property type="entry name" value="PRK05477.1-4"/>
    <property type="match status" value="1"/>
</dbReference>
<dbReference type="PANTHER" id="PTHR11659">
    <property type="entry name" value="GLUTAMYL-TRNA GLN AMIDOTRANSFERASE SUBUNIT B MITOCHONDRIAL AND PROKARYOTIC PET112-RELATED"/>
    <property type="match status" value="1"/>
</dbReference>
<dbReference type="PANTHER" id="PTHR11659:SF0">
    <property type="entry name" value="GLUTAMYL-TRNA(GLN) AMIDOTRANSFERASE SUBUNIT B, MITOCHONDRIAL"/>
    <property type="match status" value="1"/>
</dbReference>
<dbReference type="Pfam" id="PF02934">
    <property type="entry name" value="GatB_N"/>
    <property type="match status" value="1"/>
</dbReference>
<dbReference type="Pfam" id="PF02637">
    <property type="entry name" value="GatB_Yqey"/>
    <property type="match status" value="1"/>
</dbReference>
<dbReference type="SMART" id="SM00845">
    <property type="entry name" value="GatB_Yqey"/>
    <property type="match status" value="1"/>
</dbReference>
<dbReference type="SUPFAM" id="SSF89095">
    <property type="entry name" value="GatB/YqeY motif"/>
    <property type="match status" value="1"/>
</dbReference>
<dbReference type="SUPFAM" id="SSF55931">
    <property type="entry name" value="Glutamine synthetase/guanido kinase"/>
    <property type="match status" value="1"/>
</dbReference>
<dbReference type="PROSITE" id="PS01234">
    <property type="entry name" value="GATB"/>
    <property type="match status" value="1"/>
</dbReference>
<organism>
    <name type="scientific">Mycoplasmopsis pulmonis (strain UAB CTIP)</name>
    <name type="common">Mycoplasma pulmonis</name>
    <dbReference type="NCBI Taxonomy" id="272635"/>
    <lineage>
        <taxon>Bacteria</taxon>
        <taxon>Bacillati</taxon>
        <taxon>Mycoplasmatota</taxon>
        <taxon>Mycoplasmoidales</taxon>
        <taxon>Metamycoplasmataceae</taxon>
        <taxon>Mycoplasmopsis</taxon>
    </lineage>
</organism>
<reference key="1">
    <citation type="journal article" date="2001" name="Nucleic Acids Res.">
        <title>The complete genome sequence of the murine respiratory pathogen Mycoplasma pulmonis.</title>
        <authorList>
            <person name="Chambaud I."/>
            <person name="Heilig R."/>
            <person name="Ferris S."/>
            <person name="Barbe V."/>
            <person name="Samson D."/>
            <person name="Galisson F."/>
            <person name="Moszer I."/>
            <person name="Dybvig K."/>
            <person name="Wroblewski H."/>
            <person name="Viari A."/>
            <person name="Rocha E.P.C."/>
            <person name="Blanchard A."/>
        </authorList>
    </citation>
    <scope>NUCLEOTIDE SEQUENCE [LARGE SCALE GENOMIC DNA]</scope>
    <source>
        <strain>UAB CTIP</strain>
    </source>
</reference>
<name>GATB_MYCPU</name>
<feature type="chain" id="PRO_0000148812" description="Aspartyl/glutamyl-tRNA(Asn/Gln) amidotransferase subunit B">
    <location>
        <begin position="1"/>
        <end position="473"/>
    </location>
</feature>
<proteinExistence type="inferred from homology"/>
<evidence type="ECO:0000250" key="1"/>
<evidence type="ECO:0000305" key="2"/>
<protein>
    <recommendedName>
        <fullName>Aspartyl/glutamyl-tRNA(Asn/Gln) amidotransferase subunit B</fullName>
        <shortName>Asp/Glu-ADT subunit B</shortName>
        <ecNumber>6.3.5.-</ecNumber>
    </recommendedName>
</protein>
<sequence length="473" mass="54753">MNNFEVIIGIEIHLELNTKTKFFSPSPIDFEAEANTLVHPIDLGYPGTLPRVNKQAIINGIKLAKALNMTIDSEIHFDRKNYFYPDLPKGFQITQQFRPIGKNGSLVLYIDDESVKIDIERIHLEEDTARQYIKENEIWYDFNRAGIPLIEIVTRPTIKSSKQASSYIDEIRKIALLLEISDARMDRGSLRADINVSLRPYGSDKLGTKVEIKNLNSLNNVKKAIDLEIKDQFQKLINNQEIIQVTKRFNEKDQVLETMRKKESTINYMYFPEPNIPIIKLEQDFIDKVQINELPNEKKLRYQKANINKIYINLLINDPKLSKYFDKINYDDKEKISNIFFSEIVALANKQNRHATDLNIKASDIEDLLKELEQGNISGKHLKKLIPLLVDNQKEIKELLEENKMILISDQSYLRAKILEIIEANSKIVEEYNQRAEKVTKFILGSLMSQTNGQANPVVSSKLVKEILEEKFK</sequence>